<keyword id="KW-0560">Oxidoreductase</keyword>
<keyword id="KW-1185">Reference proteome</keyword>
<feature type="chain" id="PRO_0000054854" description="Probable oxidoreductase EphD">
    <location>
        <begin position="1"/>
        <end position="592"/>
    </location>
</feature>
<feature type="domain" description="AB hydrolase-1" evidence="2">
    <location>
        <begin position="30"/>
        <end position="286"/>
    </location>
</feature>
<feature type="active site" description="Proton acceptor" evidence="3">
    <location>
        <position position="474"/>
    </location>
</feature>
<feature type="binding site" evidence="1">
    <location>
        <position position="461"/>
    </location>
    <ligand>
        <name>substrate</name>
    </ligand>
</feature>
<protein>
    <recommendedName>
        <fullName>Probable oxidoreductase EphD</fullName>
        <ecNumber>1.-.-.-</ecNumber>
    </recommendedName>
</protein>
<evidence type="ECO:0000250" key="1"/>
<evidence type="ECO:0000255" key="2"/>
<evidence type="ECO:0000255" key="3">
    <source>
        <dbReference type="PROSITE-ProRule" id="PRU10001"/>
    </source>
</evidence>
<evidence type="ECO:0000305" key="4"/>
<accession>P9WGS3</accession>
<accession>L0TBU4</accession>
<accession>P66777</accession>
<accession>Q10402</accession>
<comment type="similarity">
    <text evidence="4">Belongs to the short-chain dehydrogenases/reductases (SDR) family.</text>
</comment>
<reference key="1">
    <citation type="journal article" date="1998" name="Nature">
        <title>Deciphering the biology of Mycobacterium tuberculosis from the complete genome sequence.</title>
        <authorList>
            <person name="Cole S.T."/>
            <person name="Brosch R."/>
            <person name="Parkhill J."/>
            <person name="Garnier T."/>
            <person name="Churcher C.M."/>
            <person name="Harris D.E."/>
            <person name="Gordon S.V."/>
            <person name="Eiglmeier K."/>
            <person name="Gas S."/>
            <person name="Barry C.E. III"/>
            <person name="Tekaia F."/>
            <person name="Badcock K."/>
            <person name="Basham D."/>
            <person name="Brown D."/>
            <person name="Chillingworth T."/>
            <person name="Connor R."/>
            <person name="Davies R.M."/>
            <person name="Devlin K."/>
            <person name="Feltwell T."/>
            <person name="Gentles S."/>
            <person name="Hamlin N."/>
            <person name="Holroyd S."/>
            <person name="Hornsby T."/>
            <person name="Jagels K."/>
            <person name="Krogh A."/>
            <person name="McLean J."/>
            <person name="Moule S."/>
            <person name="Murphy L.D."/>
            <person name="Oliver S."/>
            <person name="Osborne J."/>
            <person name="Quail M.A."/>
            <person name="Rajandream M.A."/>
            <person name="Rogers J."/>
            <person name="Rutter S."/>
            <person name="Seeger K."/>
            <person name="Skelton S."/>
            <person name="Squares S."/>
            <person name="Squares R."/>
            <person name="Sulston J.E."/>
            <person name="Taylor K."/>
            <person name="Whitehead S."/>
            <person name="Barrell B.G."/>
        </authorList>
    </citation>
    <scope>NUCLEOTIDE SEQUENCE [LARGE SCALE GENOMIC DNA]</scope>
    <source>
        <strain>ATCC 25618 / H37Rv</strain>
    </source>
</reference>
<reference key="2">
    <citation type="journal article" date="2011" name="Mol. Cell. Proteomics">
        <title>Proteogenomic analysis of Mycobacterium tuberculosis by high resolution mass spectrometry.</title>
        <authorList>
            <person name="Kelkar D.S."/>
            <person name="Kumar D."/>
            <person name="Kumar P."/>
            <person name="Balakrishnan L."/>
            <person name="Muthusamy B."/>
            <person name="Yadav A.K."/>
            <person name="Shrivastava P."/>
            <person name="Marimuthu A."/>
            <person name="Anand S."/>
            <person name="Sundaram H."/>
            <person name="Kingsbury R."/>
            <person name="Harsha H.C."/>
            <person name="Nair B."/>
            <person name="Prasad T.S."/>
            <person name="Chauhan D.S."/>
            <person name="Katoch K."/>
            <person name="Katoch V.M."/>
            <person name="Kumar P."/>
            <person name="Chaerkady R."/>
            <person name="Ramachandran S."/>
            <person name="Dash D."/>
            <person name="Pandey A."/>
        </authorList>
    </citation>
    <scope>IDENTIFICATION BY MASS SPECTROMETRY [LARGE SCALE ANALYSIS]</scope>
    <source>
        <strain>ATCC 25618 / H37Rv</strain>
    </source>
</reference>
<proteinExistence type="evidence at protein level"/>
<organism>
    <name type="scientific">Mycobacterium tuberculosis (strain ATCC 25618 / H37Rv)</name>
    <dbReference type="NCBI Taxonomy" id="83332"/>
    <lineage>
        <taxon>Bacteria</taxon>
        <taxon>Bacillati</taxon>
        <taxon>Actinomycetota</taxon>
        <taxon>Actinomycetes</taxon>
        <taxon>Mycobacteriales</taxon>
        <taxon>Mycobacteriaceae</taxon>
        <taxon>Mycobacterium</taxon>
        <taxon>Mycobacterium tuberculosis complex</taxon>
    </lineage>
</organism>
<gene>
    <name type="primary">ephD</name>
    <name type="ordered locus">Rv2214c</name>
    <name type="ORF">MTCY190.25c</name>
</gene>
<name>EPHD_MYCTU</name>
<sequence length="592" mass="64030">MPATQQMSRLVDSPDGVRIAVYHEGNPDGPTVVLVHGFPDSHVLWDGVVPLLAERFRIVRYDNRGVGRSSVPKPISAYTMAHFADDFDAVIGELSPGEPVHVLAHDWGSVGVWEYLRRPGASDRVASFTSVSGPSQDHLVNYVYGGLRRPWRPRTFLRAISQTLRLSYMALFSVPVVAPLLLRVALSSAAVRRNMVGDIPVDQIHHSETLARDAAHSVKTYPANYFRSFSSSRRGRAIPIVDVPVQLIVNSQDPYVRPYGYDQTARWVPRLWRRDIKAGHFSPMSHPQVMAAAVHDFADLADGKQPSRALLRAQVGRPRGYFGDTLVSVTGAGSGIGRETALAFAREGAEIVISDIDEATVKDTAAEIAARGGIAYPYVLDVSDAEAVEAFAERVSAEHGVPDIVVNNAGIGQAGRFLDTPAEQFDRVLAVNLGGVVNGCRAFGQRLVERGTGGHIVNVSSMAAYAPLQSLSAYCTSKAATYMFSDCLRAELDAAGVGLTTICPGVIDTNIVATTGFHAPGTDEEKIDGRRGQIDKMFALRSYGPDKVADAIVSAVKKKKPIRPVAPEAYALYGISRVLPQALRSTARLRVI</sequence>
<dbReference type="EC" id="1.-.-.-"/>
<dbReference type="EMBL" id="AL123456">
    <property type="protein sequence ID" value="CCP44991.1"/>
    <property type="molecule type" value="Genomic_DNA"/>
</dbReference>
<dbReference type="PIR" id="G70786">
    <property type="entry name" value="G70786"/>
</dbReference>
<dbReference type="RefSeq" id="NP_216730.1">
    <property type="nucleotide sequence ID" value="NC_000962.3"/>
</dbReference>
<dbReference type="RefSeq" id="WP_003411445.1">
    <property type="nucleotide sequence ID" value="NZ_NVQJ01000008.1"/>
</dbReference>
<dbReference type="SMR" id="P9WGS3"/>
<dbReference type="STRING" id="83332.Rv2214c"/>
<dbReference type="ESTHER" id="myctu-ephd">
    <property type="family name" value="Epoxide_hydrolase"/>
</dbReference>
<dbReference type="PaxDb" id="83332-Rv2214c"/>
<dbReference type="DNASU" id="887472"/>
<dbReference type="GeneID" id="887472"/>
<dbReference type="KEGG" id="mtu:Rv2214c"/>
<dbReference type="KEGG" id="mtv:RVBD_2214c"/>
<dbReference type="TubercuList" id="Rv2214c"/>
<dbReference type="eggNOG" id="COG1028">
    <property type="taxonomic scope" value="Bacteria"/>
</dbReference>
<dbReference type="eggNOG" id="COG2267">
    <property type="taxonomic scope" value="Bacteria"/>
</dbReference>
<dbReference type="InParanoid" id="P9WGS3"/>
<dbReference type="OrthoDB" id="4220752at2"/>
<dbReference type="PhylomeDB" id="P9WGS3"/>
<dbReference type="Proteomes" id="UP000001584">
    <property type="component" value="Chromosome"/>
</dbReference>
<dbReference type="GO" id="GO:0005829">
    <property type="term" value="C:cytosol"/>
    <property type="evidence" value="ECO:0007005"/>
    <property type="project" value="MTBBASE"/>
</dbReference>
<dbReference type="GO" id="GO:0009274">
    <property type="term" value="C:peptidoglycan-based cell wall"/>
    <property type="evidence" value="ECO:0007005"/>
    <property type="project" value="MTBBASE"/>
</dbReference>
<dbReference type="GO" id="GO:0005886">
    <property type="term" value="C:plasma membrane"/>
    <property type="evidence" value="ECO:0007005"/>
    <property type="project" value="MTBBASE"/>
</dbReference>
<dbReference type="GO" id="GO:0016491">
    <property type="term" value="F:oxidoreductase activity"/>
    <property type="evidence" value="ECO:0007669"/>
    <property type="project" value="UniProtKB-KW"/>
</dbReference>
<dbReference type="CDD" id="cd05233">
    <property type="entry name" value="SDR_c"/>
    <property type="match status" value="1"/>
</dbReference>
<dbReference type="FunFam" id="3.40.50.720:FF:000666">
    <property type="entry name" value="Probable oxidoreductase EphD"/>
    <property type="match status" value="1"/>
</dbReference>
<dbReference type="Gene3D" id="3.40.50.1820">
    <property type="entry name" value="alpha/beta hydrolase"/>
    <property type="match status" value="1"/>
</dbReference>
<dbReference type="Gene3D" id="3.40.50.720">
    <property type="entry name" value="NAD(P)-binding Rossmann-like Domain"/>
    <property type="match status" value="1"/>
</dbReference>
<dbReference type="InterPro" id="IPR000073">
    <property type="entry name" value="AB_hydrolase_1"/>
</dbReference>
<dbReference type="InterPro" id="IPR029058">
    <property type="entry name" value="AB_hydrolase_fold"/>
</dbReference>
<dbReference type="InterPro" id="IPR036291">
    <property type="entry name" value="NAD(P)-bd_dom_sf"/>
</dbReference>
<dbReference type="InterPro" id="IPR020904">
    <property type="entry name" value="Sc_DH/Rdtase_CS"/>
</dbReference>
<dbReference type="InterPro" id="IPR002347">
    <property type="entry name" value="SDR_fam"/>
</dbReference>
<dbReference type="NCBIfam" id="NF004514">
    <property type="entry name" value="PRK05855.1"/>
    <property type="match status" value="1"/>
</dbReference>
<dbReference type="PANTHER" id="PTHR43391:SF12">
    <property type="entry name" value="OXIDOREDUCTASE EPHD-RELATED"/>
    <property type="match status" value="1"/>
</dbReference>
<dbReference type="PANTHER" id="PTHR43391">
    <property type="entry name" value="RETINOL DEHYDROGENASE-RELATED"/>
    <property type="match status" value="1"/>
</dbReference>
<dbReference type="Pfam" id="PF00561">
    <property type="entry name" value="Abhydrolase_1"/>
    <property type="match status" value="1"/>
</dbReference>
<dbReference type="Pfam" id="PF00106">
    <property type="entry name" value="adh_short"/>
    <property type="match status" value="1"/>
</dbReference>
<dbReference type="PRINTS" id="PR00081">
    <property type="entry name" value="GDHRDH"/>
</dbReference>
<dbReference type="PRINTS" id="PR00080">
    <property type="entry name" value="SDRFAMILY"/>
</dbReference>
<dbReference type="SMART" id="SM00822">
    <property type="entry name" value="PKS_KR"/>
    <property type="match status" value="1"/>
</dbReference>
<dbReference type="SUPFAM" id="SSF53474">
    <property type="entry name" value="alpha/beta-Hydrolases"/>
    <property type="match status" value="1"/>
</dbReference>
<dbReference type="SUPFAM" id="SSF51735">
    <property type="entry name" value="NAD(P)-binding Rossmann-fold domains"/>
    <property type="match status" value="1"/>
</dbReference>
<dbReference type="PROSITE" id="PS00061">
    <property type="entry name" value="ADH_SHORT"/>
    <property type="match status" value="1"/>
</dbReference>